<proteinExistence type="inferred from homology"/>
<evidence type="ECO:0000255" key="1">
    <source>
        <dbReference type="HAMAP-Rule" id="MF_01227"/>
    </source>
</evidence>
<evidence type="ECO:0000256" key="2">
    <source>
        <dbReference type="SAM" id="MobiDB-lite"/>
    </source>
</evidence>
<reference key="1">
    <citation type="submission" date="2009-01" db="EMBL/GenBank/DDBJ databases">
        <title>Complete sequence of Anaeromyxobacter dehalogenans 2CP-1.</title>
        <authorList>
            <person name="Lucas S."/>
            <person name="Copeland A."/>
            <person name="Lapidus A."/>
            <person name="Glavina del Rio T."/>
            <person name="Dalin E."/>
            <person name="Tice H."/>
            <person name="Bruce D."/>
            <person name="Goodwin L."/>
            <person name="Pitluck S."/>
            <person name="Saunders E."/>
            <person name="Brettin T."/>
            <person name="Detter J.C."/>
            <person name="Han C."/>
            <person name="Larimer F."/>
            <person name="Land M."/>
            <person name="Hauser L."/>
            <person name="Kyrpides N."/>
            <person name="Ovchinnikova G."/>
            <person name="Beliaev A.S."/>
            <person name="Richardson P."/>
        </authorList>
    </citation>
    <scope>NUCLEOTIDE SEQUENCE [LARGE SCALE GENOMIC DNA]</scope>
    <source>
        <strain>2CP-1 / ATCC BAA-258</strain>
    </source>
</reference>
<feature type="chain" id="PRO_1000164923" description="CTP synthase">
    <location>
        <begin position="1"/>
        <end position="555"/>
    </location>
</feature>
<feature type="domain" description="Glutamine amidotransferase type-1" evidence="1">
    <location>
        <begin position="297"/>
        <end position="537"/>
    </location>
</feature>
<feature type="region of interest" description="Amidoligase domain" evidence="1">
    <location>
        <begin position="1"/>
        <end position="271"/>
    </location>
</feature>
<feature type="region of interest" description="Disordered" evidence="2">
    <location>
        <begin position="535"/>
        <end position="555"/>
    </location>
</feature>
<feature type="active site" description="Nucleophile; for glutamine hydrolysis" evidence="1">
    <location>
        <position position="385"/>
    </location>
</feature>
<feature type="active site" evidence="1">
    <location>
        <position position="510"/>
    </location>
</feature>
<feature type="active site" evidence="1">
    <location>
        <position position="512"/>
    </location>
</feature>
<feature type="binding site" evidence="1">
    <location>
        <position position="19"/>
    </location>
    <ligand>
        <name>CTP</name>
        <dbReference type="ChEBI" id="CHEBI:37563"/>
        <note>allosteric inhibitor</note>
    </ligand>
</feature>
<feature type="binding site" evidence="1">
    <location>
        <position position="19"/>
    </location>
    <ligand>
        <name>UTP</name>
        <dbReference type="ChEBI" id="CHEBI:46398"/>
    </ligand>
</feature>
<feature type="binding site" evidence="1">
    <location>
        <begin position="20"/>
        <end position="25"/>
    </location>
    <ligand>
        <name>ATP</name>
        <dbReference type="ChEBI" id="CHEBI:30616"/>
    </ligand>
</feature>
<feature type="binding site" evidence="1">
    <location>
        <position position="77"/>
    </location>
    <ligand>
        <name>ATP</name>
        <dbReference type="ChEBI" id="CHEBI:30616"/>
    </ligand>
</feature>
<feature type="binding site" evidence="1">
    <location>
        <position position="77"/>
    </location>
    <ligand>
        <name>Mg(2+)</name>
        <dbReference type="ChEBI" id="CHEBI:18420"/>
    </ligand>
</feature>
<feature type="binding site" evidence="1">
    <location>
        <position position="145"/>
    </location>
    <ligand>
        <name>Mg(2+)</name>
        <dbReference type="ChEBI" id="CHEBI:18420"/>
    </ligand>
</feature>
<feature type="binding site" evidence="1">
    <location>
        <begin position="152"/>
        <end position="154"/>
    </location>
    <ligand>
        <name>CTP</name>
        <dbReference type="ChEBI" id="CHEBI:37563"/>
        <note>allosteric inhibitor</note>
    </ligand>
</feature>
<feature type="binding site" evidence="1">
    <location>
        <begin position="192"/>
        <end position="197"/>
    </location>
    <ligand>
        <name>CTP</name>
        <dbReference type="ChEBI" id="CHEBI:37563"/>
        <note>allosteric inhibitor</note>
    </ligand>
</feature>
<feature type="binding site" evidence="1">
    <location>
        <begin position="192"/>
        <end position="197"/>
    </location>
    <ligand>
        <name>UTP</name>
        <dbReference type="ChEBI" id="CHEBI:46398"/>
    </ligand>
</feature>
<feature type="binding site" evidence="1">
    <location>
        <position position="228"/>
    </location>
    <ligand>
        <name>CTP</name>
        <dbReference type="ChEBI" id="CHEBI:37563"/>
        <note>allosteric inhibitor</note>
    </ligand>
</feature>
<feature type="binding site" evidence="1">
    <location>
        <position position="228"/>
    </location>
    <ligand>
        <name>UTP</name>
        <dbReference type="ChEBI" id="CHEBI:46398"/>
    </ligand>
</feature>
<feature type="binding site" evidence="1">
    <location>
        <position position="358"/>
    </location>
    <ligand>
        <name>L-glutamine</name>
        <dbReference type="ChEBI" id="CHEBI:58359"/>
    </ligand>
</feature>
<feature type="binding site" evidence="1">
    <location>
        <begin position="386"/>
        <end position="389"/>
    </location>
    <ligand>
        <name>L-glutamine</name>
        <dbReference type="ChEBI" id="CHEBI:58359"/>
    </ligand>
</feature>
<feature type="binding site" evidence="1">
    <location>
        <position position="409"/>
    </location>
    <ligand>
        <name>L-glutamine</name>
        <dbReference type="ChEBI" id="CHEBI:58359"/>
    </ligand>
</feature>
<feature type="binding site" evidence="1">
    <location>
        <position position="466"/>
    </location>
    <ligand>
        <name>L-glutamine</name>
        <dbReference type="ChEBI" id="CHEBI:58359"/>
    </ligand>
</feature>
<accession>B8JBN6</accession>
<dbReference type="EC" id="6.3.4.2" evidence="1"/>
<dbReference type="EMBL" id="CP001359">
    <property type="protein sequence ID" value="ACL67644.1"/>
    <property type="molecule type" value="Genomic_DNA"/>
</dbReference>
<dbReference type="RefSeq" id="WP_015935341.1">
    <property type="nucleotide sequence ID" value="NC_011891.1"/>
</dbReference>
<dbReference type="SMR" id="B8JBN6"/>
<dbReference type="MEROPS" id="C26.964"/>
<dbReference type="KEGG" id="acp:A2cp1_4327"/>
<dbReference type="HOGENOM" id="CLU_011675_5_0_7"/>
<dbReference type="UniPathway" id="UPA00159">
    <property type="reaction ID" value="UER00277"/>
</dbReference>
<dbReference type="Proteomes" id="UP000007089">
    <property type="component" value="Chromosome"/>
</dbReference>
<dbReference type="GO" id="GO:0005829">
    <property type="term" value="C:cytosol"/>
    <property type="evidence" value="ECO:0007669"/>
    <property type="project" value="TreeGrafter"/>
</dbReference>
<dbReference type="GO" id="GO:0005524">
    <property type="term" value="F:ATP binding"/>
    <property type="evidence" value="ECO:0007669"/>
    <property type="project" value="UniProtKB-KW"/>
</dbReference>
<dbReference type="GO" id="GO:0003883">
    <property type="term" value="F:CTP synthase activity"/>
    <property type="evidence" value="ECO:0007669"/>
    <property type="project" value="UniProtKB-UniRule"/>
</dbReference>
<dbReference type="GO" id="GO:0004359">
    <property type="term" value="F:glutaminase activity"/>
    <property type="evidence" value="ECO:0007669"/>
    <property type="project" value="RHEA"/>
</dbReference>
<dbReference type="GO" id="GO:0042802">
    <property type="term" value="F:identical protein binding"/>
    <property type="evidence" value="ECO:0007669"/>
    <property type="project" value="TreeGrafter"/>
</dbReference>
<dbReference type="GO" id="GO:0046872">
    <property type="term" value="F:metal ion binding"/>
    <property type="evidence" value="ECO:0007669"/>
    <property type="project" value="UniProtKB-KW"/>
</dbReference>
<dbReference type="GO" id="GO:0044210">
    <property type="term" value="P:'de novo' CTP biosynthetic process"/>
    <property type="evidence" value="ECO:0007669"/>
    <property type="project" value="UniProtKB-UniRule"/>
</dbReference>
<dbReference type="GO" id="GO:0019856">
    <property type="term" value="P:pyrimidine nucleobase biosynthetic process"/>
    <property type="evidence" value="ECO:0007669"/>
    <property type="project" value="TreeGrafter"/>
</dbReference>
<dbReference type="CDD" id="cd03113">
    <property type="entry name" value="CTPS_N"/>
    <property type="match status" value="1"/>
</dbReference>
<dbReference type="CDD" id="cd01746">
    <property type="entry name" value="GATase1_CTP_Synthase"/>
    <property type="match status" value="1"/>
</dbReference>
<dbReference type="FunFam" id="3.40.50.300:FF:000009">
    <property type="entry name" value="CTP synthase"/>
    <property type="match status" value="1"/>
</dbReference>
<dbReference type="FunFam" id="3.40.50.880:FF:000002">
    <property type="entry name" value="CTP synthase"/>
    <property type="match status" value="1"/>
</dbReference>
<dbReference type="Gene3D" id="3.40.50.880">
    <property type="match status" value="1"/>
</dbReference>
<dbReference type="Gene3D" id="3.40.50.300">
    <property type="entry name" value="P-loop containing nucleotide triphosphate hydrolases"/>
    <property type="match status" value="1"/>
</dbReference>
<dbReference type="HAMAP" id="MF_01227">
    <property type="entry name" value="PyrG"/>
    <property type="match status" value="1"/>
</dbReference>
<dbReference type="InterPro" id="IPR029062">
    <property type="entry name" value="Class_I_gatase-like"/>
</dbReference>
<dbReference type="InterPro" id="IPR004468">
    <property type="entry name" value="CTP_synthase"/>
</dbReference>
<dbReference type="InterPro" id="IPR017456">
    <property type="entry name" value="CTP_synthase_N"/>
</dbReference>
<dbReference type="InterPro" id="IPR017926">
    <property type="entry name" value="GATASE"/>
</dbReference>
<dbReference type="InterPro" id="IPR033828">
    <property type="entry name" value="GATase1_CTP_Synthase"/>
</dbReference>
<dbReference type="InterPro" id="IPR027417">
    <property type="entry name" value="P-loop_NTPase"/>
</dbReference>
<dbReference type="NCBIfam" id="NF003792">
    <property type="entry name" value="PRK05380.1"/>
    <property type="match status" value="1"/>
</dbReference>
<dbReference type="NCBIfam" id="TIGR00337">
    <property type="entry name" value="PyrG"/>
    <property type="match status" value="1"/>
</dbReference>
<dbReference type="PANTHER" id="PTHR11550">
    <property type="entry name" value="CTP SYNTHASE"/>
    <property type="match status" value="1"/>
</dbReference>
<dbReference type="PANTHER" id="PTHR11550:SF0">
    <property type="entry name" value="CTP SYNTHASE-RELATED"/>
    <property type="match status" value="1"/>
</dbReference>
<dbReference type="Pfam" id="PF06418">
    <property type="entry name" value="CTP_synth_N"/>
    <property type="match status" value="1"/>
</dbReference>
<dbReference type="Pfam" id="PF00117">
    <property type="entry name" value="GATase"/>
    <property type="match status" value="1"/>
</dbReference>
<dbReference type="SUPFAM" id="SSF52317">
    <property type="entry name" value="Class I glutamine amidotransferase-like"/>
    <property type="match status" value="1"/>
</dbReference>
<dbReference type="SUPFAM" id="SSF52540">
    <property type="entry name" value="P-loop containing nucleoside triphosphate hydrolases"/>
    <property type="match status" value="1"/>
</dbReference>
<dbReference type="PROSITE" id="PS51273">
    <property type="entry name" value="GATASE_TYPE_1"/>
    <property type="match status" value="1"/>
</dbReference>
<sequence length="555" mass="61365">MVKRGKKTKYLFVTGGVVSSLGKGLSAASIGALLENRGLEVQHLKLDPYINVDPGTMSPFQHGEVFVTDDGAETDLDLGHYERFTSAKMTRRNNYTTGRIYQNVIQRERRGEYLGKTVQVIPHITDEIKAVIREAAGGADILIVEVGGTVGDIESLPFLEAIRQMKYDVGEENAVYAHLTLVPFIAAAGELKTKPTQHSVKELREIGIQPDLLLCRSDREIPRDMKDKIALFCNVDPSAVFTALDVPSIYEVPLSLHREGLDDKLAELFNIWSRAPRLERWETIVDKVKNPRRGEVRIGIVGKYVELHESYKSLNEALVHGGIANDARVKLAFIDSTKLEEGDLSDLEKVDAILVPGGFGIRGTEGKILGVKYAREHKVPFFGICLGLQMAVIEMARNVLGLAGANSLEFDEQTPHPVVTLMEGQKGVTDKGGTMRLGAYPCALKEGTKARALYGADLVHERHRHRFEFNNDYRAQFEAAGMVFSGVNPDLGLVEMIELPGQHFVGCQFHPEFRSKPFAPHPLFAGFVKAALEHRDAQQRQPPAEVKKLAVGKNG</sequence>
<keyword id="KW-0067">ATP-binding</keyword>
<keyword id="KW-0315">Glutamine amidotransferase</keyword>
<keyword id="KW-0436">Ligase</keyword>
<keyword id="KW-0460">Magnesium</keyword>
<keyword id="KW-0479">Metal-binding</keyword>
<keyword id="KW-0547">Nucleotide-binding</keyword>
<keyword id="KW-0665">Pyrimidine biosynthesis</keyword>
<name>PYRG_ANAD2</name>
<comment type="function">
    <text evidence="1">Catalyzes the ATP-dependent amination of UTP to CTP with either L-glutamine or ammonia as the source of nitrogen. Regulates intracellular CTP levels through interactions with the four ribonucleotide triphosphates.</text>
</comment>
<comment type="catalytic activity">
    <reaction evidence="1">
        <text>UTP + L-glutamine + ATP + H2O = CTP + L-glutamate + ADP + phosphate + 2 H(+)</text>
        <dbReference type="Rhea" id="RHEA:26426"/>
        <dbReference type="ChEBI" id="CHEBI:15377"/>
        <dbReference type="ChEBI" id="CHEBI:15378"/>
        <dbReference type="ChEBI" id="CHEBI:29985"/>
        <dbReference type="ChEBI" id="CHEBI:30616"/>
        <dbReference type="ChEBI" id="CHEBI:37563"/>
        <dbReference type="ChEBI" id="CHEBI:43474"/>
        <dbReference type="ChEBI" id="CHEBI:46398"/>
        <dbReference type="ChEBI" id="CHEBI:58359"/>
        <dbReference type="ChEBI" id="CHEBI:456216"/>
        <dbReference type="EC" id="6.3.4.2"/>
    </reaction>
</comment>
<comment type="catalytic activity">
    <reaction evidence="1">
        <text>L-glutamine + H2O = L-glutamate + NH4(+)</text>
        <dbReference type="Rhea" id="RHEA:15889"/>
        <dbReference type="ChEBI" id="CHEBI:15377"/>
        <dbReference type="ChEBI" id="CHEBI:28938"/>
        <dbReference type="ChEBI" id="CHEBI:29985"/>
        <dbReference type="ChEBI" id="CHEBI:58359"/>
    </reaction>
</comment>
<comment type="catalytic activity">
    <reaction evidence="1">
        <text>UTP + NH4(+) + ATP = CTP + ADP + phosphate + 2 H(+)</text>
        <dbReference type="Rhea" id="RHEA:16597"/>
        <dbReference type="ChEBI" id="CHEBI:15378"/>
        <dbReference type="ChEBI" id="CHEBI:28938"/>
        <dbReference type="ChEBI" id="CHEBI:30616"/>
        <dbReference type="ChEBI" id="CHEBI:37563"/>
        <dbReference type="ChEBI" id="CHEBI:43474"/>
        <dbReference type="ChEBI" id="CHEBI:46398"/>
        <dbReference type="ChEBI" id="CHEBI:456216"/>
    </reaction>
</comment>
<comment type="activity regulation">
    <text evidence="1">Allosterically activated by GTP, when glutamine is the substrate; GTP has no effect on the reaction when ammonia is the substrate. The allosteric effector GTP functions by stabilizing the protein conformation that binds the tetrahedral intermediate(s) formed during glutamine hydrolysis. Inhibited by the product CTP, via allosteric rather than competitive inhibition.</text>
</comment>
<comment type="pathway">
    <text evidence="1">Pyrimidine metabolism; CTP biosynthesis via de novo pathway; CTP from UDP: step 2/2.</text>
</comment>
<comment type="subunit">
    <text evidence="1">Homotetramer.</text>
</comment>
<comment type="miscellaneous">
    <text evidence="1">CTPSs have evolved a hybrid strategy for distinguishing between UTP and CTP. The overlapping regions of the product feedback inhibitory and substrate sites recognize a common feature in both compounds, the triphosphate moiety. To differentiate isosteric substrate and product pyrimidine rings, an additional pocket far from the expected kinase/ligase catalytic site, specifically recognizes the cytosine and ribose portions of the product inhibitor.</text>
</comment>
<comment type="similarity">
    <text evidence="1">Belongs to the CTP synthase family.</text>
</comment>
<protein>
    <recommendedName>
        <fullName evidence="1">CTP synthase</fullName>
        <ecNumber evidence="1">6.3.4.2</ecNumber>
    </recommendedName>
    <alternativeName>
        <fullName evidence="1">Cytidine 5'-triphosphate synthase</fullName>
    </alternativeName>
    <alternativeName>
        <fullName evidence="1">Cytidine triphosphate synthetase</fullName>
        <shortName evidence="1">CTP synthetase</shortName>
        <shortName evidence="1">CTPS</shortName>
    </alternativeName>
    <alternativeName>
        <fullName evidence="1">UTP--ammonia ligase</fullName>
    </alternativeName>
</protein>
<gene>
    <name evidence="1" type="primary">pyrG</name>
    <name type="ordered locus">A2cp1_4327</name>
</gene>
<organism>
    <name type="scientific">Anaeromyxobacter dehalogenans (strain 2CP-1 / ATCC BAA-258)</name>
    <dbReference type="NCBI Taxonomy" id="455488"/>
    <lineage>
        <taxon>Bacteria</taxon>
        <taxon>Pseudomonadati</taxon>
        <taxon>Myxococcota</taxon>
        <taxon>Myxococcia</taxon>
        <taxon>Myxococcales</taxon>
        <taxon>Cystobacterineae</taxon>
        <taxon>Anaeromyxobacteraceae</taxon>
        <taxon>Anaeromyxobacter</taxon>
    </lineage>
</organism>